<accession>P54332</accession>
<proteinExistence type="evidence at protein level"/>
<organism>
    <name type="scientific">Bacillus subtilis (strain 168)</name>
    <dbReference type="NCBI Taxonomy" id="224308"/>
    <lineage>
        <taxon>Bacteria</taxon>
        <taxon>Bacillati</taxon>
        <taxon>Bacillota</taxon>
        <taxon>Bacilli</taxon>
        <taxon>Bacillales</taxon>
        <taxon>Bacillaceae</taxon>
        <taxon>Bacillus</taxon>
    </lineage>
</organism>
<evidence type="ECO:0000305" key="1"/>
<evidence type="ECO:0007829" key="2">
    <source>
        <dbReference type="PDB" id="2GUJ"/>
    </source>
</evidence>
<sequence>MALKAQNTISGKEGRLFLDGEEMAHIKTFEANVEKNKSEVNIMGRRMTGHKTTGANGTGTATFYKVTSKFVLLMMDYVKKGSDPYFTLQAVLDDQSSGRGTERVTLYDVNFDSAKIASLDVDSEALEEEVPFTFEDFDVPEKLSDTF</sequence>
<protein>
    <recommendedName>
        <fullName>Phage-like element PBSX protein XkdM</fullName>
    </recommendedName>
</protein>
<reference key="1">
    <citation type="submission" date="1996-03" db="EMBL/GenBank/DDBJ databases">
        <authorList>
            <person name="Krogh S."/>
            <person name="O'Reilly M."/>
            <person name="Nolan N."/>
            <person name="Devine K.M."/>
        </authorList>
    </citation>
    <scope>NUCLEOTIDE SEQUENCE [GENOMIC DNA]</scope>
    <source>
        <strain>168</strain>
    </source>
</reference>
<reference key="2">
    <citation type="journal article" date="1997" name="Nature">
        <title>The complete genome sequence of the Gram-positive bacterium Bacillus subtilis.</title>
        <authorList>
            <person name="Kunst F."/>
            <person name="Ogasawara N."/>
            <person name="Moszer I."/>
            <person name="Albertini A.M."/>
            <person name="Alloni G."/>
            <person name="Azevedo V."/>
            <person name="Bertero M.G."/>
            <person name="Bessieres P."/>
            <person name="Bolotin A."/>
            <person name="Borchert S."/>
            <person name="Borriss R."/>
            <person name="Boursier L."/>
            <person name="Brans A."/>
            <person name="Braun M."/>
            <person name="Brignell S.C."/>
            <person name="Bron S."/>
            <person name="Brouillet S."/>
            <person name="Bruschi C.V."/>
            <person name="Caldwell B."/>
            <person name="Capuano V."/>
            <person name="Carter N.M."/>
            <person name="Choi S.-K."/>
            <person name="Codani J.-J."/>
            <person name="Connerton I.F."/>
            <person name="Cummings N.J."/>
            <person name="Daniel R.A."/>
            <person name="Denizot F."/>
            <person name="Devine K.M."/>
            <person name="Duesterhoeft A."/>
            <person name="Ehrlich S.D."/>
            <person name="Emmerson P.T."/>
            <person name="Entian K.-D."/>
            <person name="Errington J."/>
            <person name="Fabret C."/>
            <person name="Ferrari E."/>
            <person name="Foulger D."/>
            <person name="Fritz C."/>
            <person name="Fujita M."/>
            <person name="Fujita Y."/>
            <person name="Fuma S."/>
            <person name="Galizzi A."/>
            <person name="Galleron N."/>
            <person name="Ghim S.-Y."/>
            <person name="Glaser P."/>
            <person name="Goffeau A."/>
            <person name="Golightly E.J."/>
            <person name="Grandi G."/>
            <person name="Guiseppi G."/>
            <person name="Guy B.J."/>
            <person name="Haga K."/>
            <person name="Haiech J."/>
            <person name="Harwood C.R."/>
            <person name="Henaut A."/>
            <person name="Hilbert H."/>
            <person name="Holsappel S."/>
            <person name="Hosono S."/>
            <person name="Hullo M.-F."/>
            <person name="Itaya M."/>
            <person name="Jones L.-M."/>
            <person name="Joris B."/>
            <person name="Karamata D."/>
            <person name="Kasahara Y."/>
            <person name="Klaerr-Blanchard M."/>
            <person name="Klein C."/>
            <person name="Kobayashi Y."/>
            <person name="Koetter P."/>
            <person name="Koningstein G."/>
            <person name="Krogh S."/>
            <person name="Kumano M."/>
            <person name="Kurita K."/>
            <person name="Lapidus A."/>
            <person name="Lardinois S."/>
            <person name="Lauber J."/>
            <person name="Lazarevic V."/>
            <person name="Lee S.-M."/>
            <person name="Levine A."/>
            <person name="Liu H."/>
            <person name="Masuda S."/>
            <person name="Mauel C."/>
            <person name="Medigue C."/>
            <person name="Medina N."/>
            <person name="Mellado R.P."/>
            <person name="Mizuno M."/>
            <person name="Moestl D."/>
            <person name="Nakai S."/>
            <person name="Noback M."/>
            <person name="Noone D."/>
            <person name="O'Reilly M."/>
            <person name="Ogawa K."/>
            <person name="Ogiwara A."/>
            <person name="Oudega B."/>
            <person name="Park S.-H."/>
            <person name="Parro V."/>
            <person name="Pohl T.M."/>
            <person name="Portetelle D."/>
            <person name="Porwollik S."/>
            <person name="Prescott A.M."/>
            <person name="Presecan E."/>
            <person name="Pujic P."/>
            <person name="Purnelle B."/>
            <person name="Rapoport G."/>
            <person name="Rey M."/>
            <person name="Reynolds S."/>
            <person name="Rieger M."/>
            <person name="Rivolta C."/>
            <person name="Rocha E."/>
            <person name="Roche B."/>
            <person name="Rose M."/>
            <person name="Sadaie Y."/>
            <person name="Sato T."/>
            <person name="Scanlan E."/>
            <person name="Schleich S."/>
            <person name="Schroeter R."/>
            <person name="Scoffone F."/>
            <person name="Sekiguchi J."/>
            <person name="Sekowska A."/>
            <person name="Seror S.J."/>
            <person name="Serror P."/>
            <person name="Shin B.-S."/>
            <person name="Soldo B."/>
            <person name="Sorokin A."/>
            <person name="Tacconi E."/>
            <person name="Takagi T."/>
            <person name="Takahashi H."/>
            <person name="Takemaru K."/>
            <person name="Takeuchi M."/>
            <person name="Tamakoshi A."/>
            <person name="Tanaka T."/>
            <person name="Terpstra P."/>
            <person name="Tognoni A."/>
            <person name="Tosato V."/>
            <person name="Uchiyama S."/>
            <person name="Vandenbol M."/>
            <person name="Vannier F."/>
            <person name="Vassarotti A."/>
            <person name="Viari A."/>
            <person name="Wambutt R."/>
            <person name="Wedler E."/>
            <person name="Wedler H."/>
            <person name="Weitzenegger T."/>
            <person name="Winters P."/>
            <person name="Wipat A."/>
            <person name="Yamamoto H."/>
            <person name="Yamane K."/>
            <person name="Yasumoto K."/>
            <person name="Yata K."/>
            <person name="Yoshida K."/>
            <person name="Yoshikawa H.-F."/>
            <person name="Zumstein E."/>
            <person name="Yoshikawa H."/>
            <person name="Danchin A."/>
        </authorList>
    </citation>
    <scope>NUCLEOTIDE SEQUENCE [LARGE SCALE GENOMIC DNA]</scope>
    <source>
        <strain>168</strain>
    </source>
</reference>
<keyword id="KW-0002">3D-structure</keyword>
<keyword id="KW-1185">Reference proteome</keyword>
<gene>
    <name type="primary">xkdM</name>
    <name type="ordered locus">BSU12660</name>
</gene>
<comment type="similarity">
    <text evidence="1">To B.subtilis YqbM.</text>
</comment>
<name>XKDM_BACSU</name>
<dbReference type="EMBL" id="Z70177">
    <property type="protein sequence ID" value="CAA94035.1"/>
    <property type="molecule type" value="Genomic_DNA"/>
</dbReference>
<dbReference type="EMBL" id="AL009126">
    <property type="protein sequence ID" value="CAB13123.1"/>
    <property type="molecule type" value="Genomic_DNA"/>
</dbReference>
<dbReference type="PIR" id="D69732">
    <property type="entry name" value="D69732"/>
</dbReference>
<dbReference type="RefSeq" id="NP_389148.1">
    <property type="nucleotide sequence ID" value="NC_000964.3"/>
</dbReference>
<dbReference type="RefSeq" id="WP_003232677.1">
    <property type="nucleotide sequence ID" value="NZ_OZ025638.1"/>
</dbReference>
<dbReference type="PDB" id="2GUJ">
    <property type="method" value="X-ray"/>
    <property type="resolution" value="3.00 A"/>
    <property type="chains" value="A/B=1-147"/>
</dbReference>
<dbReference type="PDB" id="5LI2">
    <property type="method" value="EM"/>
    <property type="resolution" value="6.20 A"/>
    <property type="chains" value="G/H/I/J/K/L=1-147"/>
</dbReference>
<dbReference type="PDBsum" id="2GUJ"/>
<dbReference type="PDBsum" id="5LI2"/>
<dbReference type="EMDB" id="EMD-4051"/>
<dbReference type="SMR" id="P54332"/>
<dbReference type="FunCoup" id="P54332">
    <property type="interactions" value="64"/>
</dbReference>
<dbReference type="STRING" id="224308.BSU12660"/>
<dbReference type="PaxDb" id="224308-BSU12660"/>
<dbReference type="EnsemblBacteria" id="CAB13123">
    <property type="protein sequence ID" value="CAB13123"/>
    <property type="gene ID" value="BSU_12660"/>
</dbReference>
<dbReference type="GeneID" id="938181"/>
<dbReference type="KEGG" id="bsu:BSU12660"/>
<dbReference type="PATRIC" id="fig|224308.179.peg.1372"/>
<dbReference type="eggNOG" id="ENOG5032S1D">
    <property type="taxonomic scope" value="Bacteria"/>
</dbReference>
<dbReference type="InParanoid" id="P54332"/>
<dbReference type="OrthoDB" id="1697482at2"/>
<dbReference type="PhylomeDB" id="P54332"/>
<dbReference type="BioCyc" id="BSUB:BSU12660-MONOMER"/>
<dbReference type="EvolutionaryTrace" id="P54332"/>
<dbReference type="Proteomes" id="UP000001570">
    <property type="component" value="Chromosome"/>
</dbReference>
<dbReference type="Gene3D" id="2.30.110.40">
    <property type="entry name" value="Phage tail tube protein"/>
    <property type="match status" value="1"/>
</dbReference>
<dbReference type="InterPro" id="IPR018989">
    <property type="entry name" value="DUF2001"/>
</dbReference>
<dbReference type="InterPro" id="IPR038628">
    <property type="entry name" value="XkdM-like_sf"/>
</dbReference>
<dbReference type="Pfam" id="PF09393">
    <property type="entry name" value="DUF2001"/>
    <property type="match status" value="1"/>
</dbReference>
<dbReference type="SUPFAM" id="SSF69279">
    <property type="entry name" value="Phage tail proteins"/>
    <property type="match status" value="1"/>
</dbReference>
<feature type="chain" id="PRO_0000066026" description="Phage-like element PBSX protein XkdM">
    <location>
        <begin position="1"/>
        <end position="147"/>
    </location>
</feature>
<feature type="strand" evidence="2">
    <location>
        <begin position="8"/>
        <end position="18"/>
    </location>
</feature>
<feature type="strand" evidence="2">
    <location>
        <begin position="26"/>
        <end position="33"/>
    </location>
</feature>
<feature type="turn" evidence="2">
    <location>
        <begin position="40"/>
        <end position="43"/>
    </location>
</feature>
<feature type="helix" evidence="2">
    <location>
        <begin position="44"/>
        <end position="47"/>
    </location>
</feature>
<feature type="strand" evidence="2">
    <location>
        <begin position="57"/>
        <end position="64"/>
    </location>
</feature>
<feature type="helix" evidence="2">
    <location>
        <begin position="68"/>
        <end position="79"/>
    </location>
</feature>
<feature type="strand" evidence="2">
    <location>
        <begin position="86"/>
        <end position="92"/>
    </location>
</feature>
<feature type="strand" evidence="2">
    <location>
        <begin position="98"/>
        <end position="100"/>
    </location>
</feature>
<feature type="strand" evidence="2">
    <location>
        <begin position="103"/>
        <end position="109"/>
    </location>
</feature>
<feature type="helix" evidence="2">
    <location>
        <begin position="113"/>
        <end position="117"/>
    </location>
</feature>
<feature type="strand" evidence="2">
    <location>
        <begin position="129"/>
        <end position="132"/>
    </location>
</feature>
<feature type="strand" evidence="2">
    <location>
        <begin position="135"/>
        <end position="138"/>
    </location>
</feature>